<organism>
    <name type="scientific">Vibrio campbellii (strain ATCC BAA-1116)</name>
    <dbReference type="NCBI Taxonomy" id="2902295"/>
    <lineage>
        <taxon>Bacteria</taxon>
        <taxon>Pseudomonadati</taxon>
        <taxon>Pseudomonadota</taxon>
        <taxon>Gammaproteobacteria</taxon>
        <taxon>Vibrionales</taxon>
        <taxon>Vibrionaceae</taxon>
        <taxon>Vibrio</taxon>
    </lineage>
</organism>
<proteinExistence type="inferred from homology"/>
<comment type="function">
    <text evidence="1">One of the primary rRNA binding proteins, it binds directly to 16S rRNA where it nucleates assembly of the body of the 30S subunit.</text>
</comment>
<comment type="function">
    <text evidence="1">With S5 and S12 plays an important role in translational accuracy.</text>
</comment>
<comment type="subunit">
    <text evidence="1">Part of the 30S ribosomal subunit. Contacts protein S5. The interaction surface between S4 and S5 is involved in control of translational fidelity.</text>
</comment>
<comment type="similarity">
    <text evidence="1">Belongs to the universal ribosomal protein uS4 family.</text>
</comment>
<keyword id="KW-0687">Ribonucleoprotein</keyword>
<keyword id="KW-0689">Ribosomal protein</keyword>
<keyword id="KW-0694">RNA-binding</keyword>
<keyword id="KW-0699">rRNA-binding</keyword>
<dbReference type="EMBL" id="CP000789">
    <property type="protein sequence ID" value="ABU69754.1"/>
    <property type="molecule type" value="Genomic_DNA"/>
</dbReference>
<dbReference type="RefSeq" id="WP_005383146.1">
    <property type="nucleotide sequence ID" value="NC_022269.1"/>
</dbReference>
<dbReference type="SMR" id="A7N0H7"/>
<dbReference type="GeneID" id="83583099"/>
<dbReference type="KEGG" id="vha:VIBHAR_00753"/>
<dbReference type="PATRIC" id="fig|338187.25.peg.1861"/>
<dbReference type="Proteomes" id="UP000008152">
    <property type="component" value="Chromosome I"/>
</dbReference>
<dbReference type="GO" id="GO:0015935">
    <property type="term" value="C:small ribosomal subunit"/>
    <property type="evidence" value="ECO:0007669"/>
    <property type="project" value="InterPro"/>
</dbReference>
<dbReference type="GO" id="GO:0019843">
    <property type="term" value="F:rRNA binding"/>
    <property type="evidence" value="ECO:0007669"/>
    <property type="project" value="UniProtKB-UniRule"/>
</dbReference>
<dbReference type="GO" id="GO:0003735">
    <property type="term" value="F:structural constituent of ribosome"/>
    <property type="evidence" value="ECO:0007669"/>
    <property type="project" value="InterPro"/>
</dbReference>
<dbReference type="GO" id="GO:0042274">
    <property type="term" value="P:ribosomal small subunit biogenesis"/>
    <property type="evidence" value="ECO:0007669"/>
    <property type="project" value="TreeGrafter"/>
</dbReference>
<dbReference type="GO" id="GO:0006412">
    <property type="term" value="P:translation"/>
    <property type="evidence" value="ECO:0007669"/>
    <property type="project" value="UniProtKB-UniRule"/>
</dbReference>
<dbReference type="CDD" id="cd00165">
    <property type="entry name" value="S4"/>
    <property type="match status" value="1"/>
</dbReference>
<dbReference type="FunFam" id="1.10.1050.10:FF:000001">
    <property type="entry name" value="30S ribosomal protein S4"/>
    <property type="match status" value="1"/>
</dbReference>
<dbReference type="FunFam" id="3.10.290.10:FF:000001">
    <property type="entry name" value="30S ribosomal protein S4"/>
    <property type="match status" value="1"/>
</dbReference>
<dbReference type="Gene3D" id="1.10.1050.10">
    <property type="entry name" value="Ribosomal Protein S4 Delta 41, Chain A, domain 1"/>
    <property type="match status" value="1"/>
</dbReference>
<dbReference type="Gene3D" id="3.10.290.10">
    <property type="entry name" value="RNA-binding S4 domain"/>
    <property type="match status" value="1"/>
</dbReference>
<dbReference type="HAMAP" id="MF_01306_B">
    <property type="entry name" value="Ribosomal_uS4_B"/>
    <property type="match status" value="1"/>
</dbReference>
<dbReference type="InterPro" id="IPR022801">
    <property type="entry name" value="Ribosomal_uS4"/>
</dbReference>
<dbReference type="InterPro" id="IPR005709">
    <property type="entry name" value="Ribosomal_uS4_bac-type"/>
</dbReference>
<dbReference type="InterPro" id="IPR018079">
    <property type="entry name" value="Ribosomal_uS4_CS"/>
</dbReference>
<dbReference type="InterPro" id="IPR001912">
    <property type="entry name" value="Ribosomal_uS4_N"/>
</dbReference>
<dbReference type="InterPro" id="IPR002942">
    <property type="entry name" value="S4_RNA-bd"/>
</dbReference>
<dbReference type="InterPro" id="IPR036986">
    <property type="entry name" value="S4_RNA-bd_sf"/>
</dbReference>
<dbReference type="NCBIfam" id="NF003717">
    <property type="entry name" value="PRK05327.1"/>
    <property type="match status" value="1"/>
</dbReference>
<dbReference type="NCBIfam" id="TIGR01017">
    <property type="entry name" value="rpsD_bact"/>
    <property type="match status" value="1"/>
</dbReference>
<dbReference type="PANTHER" id="PTHR11831">
    <property type="entry name" value="30S 40S RIBOSOMAL PROTEIN"/>
    <property type="match status" value="1"/>
</dbReference>
<dbReference type="PANTHER" id="PTHR11831:SF4">
    <property type="entry name" value="SMALL RIBOSOMAL SUBUNIT PROTEIN US4M"/>
    <property type="match status" value="1"/>
</dbReference>
<dbReference type="Pfam" id="PF00163">
    <property type="entry name" value="Ribosomal_S4"/>
    <property type="match status" value="1"/>
</dbReference>
<dbReference type="Pfam" id="PF01479">
    <property type="entry name" value="S4"/>
    <property type="match status" value="1"/>
</dbReference>
<dbReference type="SMART" id="SM01390">
    <property type="entry name" value="Ribosomal_S4"/>
    <property type="match status" value="1"/>
</dbReference>
<dbReference type="SMART" id="SM00363">
    <property type="entry name" value="S4"/>
    <property type="match status" value="1"/>
</dbReference>
<dbReference type="SUPFAM" id="SSF55174">
    <property type="entry name" value="Alpha-L RNA-binding motif"/>
    <property type="match status" value="1"/>
</dbReference>
<dbReference type="PROSITE" id="PS00632">
    <property type="entry name" value="RIBOSOMAL_S4"/>
    <property type="match status" value="1"/>
</dbReference>
<dbReference type="PROSITE" id="PS50889">
    <property type="entry name" value="S4"/>
    <property type="match status" value="1"/>
</dbReference>
<reference key="1">
    <citation type="submission" date="2007-08" db="EMBL/GenBank/DDBJ databases">
        <authorList>
            <consortium name="The Vibrio harveyi Genome Sequencing Project"/>
            <person name="Bassler B."/>
            <person name="Clifton S.W."/>
            <person name="Fulton L."/>
            <person name="Delehaunty K."/>
            <person name="Fronick C."/>
            <person name="Harrison M."/>
            <person name="Markivic C."/>
            <person name="Fulton R."/>
            <person name="Tin-Wollam A.-M."/>
            <person name="Shah N."/>
            <person name="Pepin K."/>
            <person name="Nash W."/>
            <person name="Thiruvilangam P."/>
            <person name="Bhonagiri V."/>
            <person name="Waters C."/>
            <person name="Tu K.C."/>
            <person name="Irgon J."/>
            <person name="Wilson R.K."/>
        </authorList>
    </citation>
    <scope>NUCLEOTIDE SEQUENCE [LARGE SCALE GENOMIC DNA]</scope>
    <source>
        <strain>ATCC BAA-1116 / BB120</strain>
    </source>
</reference>
<feature type="chain" id="PRO_0000322351" description="Small ribosomal subunit protein uS4">
    <location>
        <begin position="1"/>
        <end position="206"/>
    </location>
</feature>
<feature type="domain" description="S4 RNA-binding" evidence="1">
    <location>
        <begin position="96"/>
        <end position="156"/>
    </location>
</feature>
<sequence>MARYLGPKLKLSRREGTDLFLKSGVRAIDTKCKIDNAPGVHGARRGRLSEYGVQLREKQKVRRMYGVLEKQFRNYYKEAARLKGNTGENLLQLLEGRLDNVVYRMGFGATRAEARQLVSHKAILVNGKVVNVPSFKVAANDVVSIREKAKQQARIKAALEVAEQREKPTWIEVDGGKMEGTFKRMPERSDLSADINEQLIVELYSK</sequence>
<evidence type="ECO:0000255" key="1">
    <source>
        <dbReference type="HAMAP-Rule" id="MF_01306"/>
    </source>
</evidence>
<evidence type="ECO:0000305" key="2"/>
<gene>
    <name evidence="1" type="primary">rpsD</name>
    <name type="ordered locus">VIBHAR_00753</name>
</gene>
<protein>
    <recommendedName>
        <fullName evidence="1">Small ribosomal subunit protein uS4</fullName>
    </recommendedName>
    <alternativeName>
        <fullName evidence="2">30S ribosomal protein S4</fullName>
    </alternativeName>
</protein>
<accession>A7N0H7</accession>
<name>RS4_VIBC1</name>